<proteinExistence type="evidence at transcript level"/>
<accession>Q9FHQ3</accession>
<gene>
    <name type="primary">HSP15.7</name>
    <name type="ordered locus">At5g37670</name>
    <name type="ORF">K12B20.120</name>
</gene>
<sequence length="137" mass="15698">MADRGIFLYPFRRFQEWSRSTALIDWMESNNSHIFKINVPGYNKEDIKVQIEEGNVLSIRGEGIKEEKKENLVWHVAEREAFSGGGSEFLRRIELPENVKVDQVKAYVENGVLTVVVPKDTSSKSSKVRNVNITSKL</sequence>
<organism>
    <name type="scientific">Arabidopsis thaliana</name>
    <name type="common">Mouse-ear cress</name>
    <dbReference type="NCBI Taxonomy" id="3702"/>
    <lineage>
        <taxon>Eukaryota</taxon>
        <taxon>Viridiplantae</taxon>
        <taxon>Streptophyta</taxon>
        <taxon>Embryophyta</taxon>
        <taxon>Tracheophyta</taxon>
        <taxon>Spermatophyta</taxon>
        <taxon>Magnoliopsida</taxon>
        <taxon>eudicotyledons</taxon>
        <taxon>Gunneridae</taxon>
        <taxon>Pentapetalae</taxon>
        <taxon>rosids</taxon>
        <taxon>malvids</taxon>
        <taxon>Brassicales</taxon>
        <taxon>Brassicaceae</taxon>
        <taxon>Camelineae</taxon>
        <taxon>Arabidopsis</taxon>
    </lineage>
</organism>
<keyword id="KW-0576">Peroxisome</keyword>
<keyword id="KW-1185">Reference proteome</keyword>
<keyword id="KW-0346">Stress response</keyword>
<name>HS157_ARATH</name>
<dbReference type="EMBL" id="DQ403190">
    <property type="protein sequence ID" value="ABD67504.1"/>
    <property type="molecule type" value="mRNA"/>
</dbReference>
<dbReference type="EMBL" id="AB018107">
    <property type="protein sequence ID" value="BAB08313.1"/>
    <property type="molecule type" value="Genomic_DNA"/>
</dbReference>
<dbReference type="EMBL" id="CP002688">
    <property type="protein sequence ID" value="AED94218.1"/>
    <property type="molecule type" value="Genomic_DNA"/>
</dbReference>
<dbReference type="EMBL" id="AK118822">
    <property type="protein sequence ID" value="BAC43412.1"/>
    <property type="molecule type" value="mRNA"/>
</dbReference>
<dbReference type="EMBL" id="BT005449">
    <property type="protein sequence ID" value="AAO63869.1"/>
    <property type="molecule type" value="mRNA"/>
</dbReference>
<dbReference type="RefSeq" id="NP_198583.1">
    <property type="nucleotide sequence ID" value="NM_123126.3"/>
</dbReference>
<dbReference type="SMR" id="Q9FHQ3"/>
<dbReference type="BioGRID" id="18997">
    <property type="interactions" value="9"/>
</dbReference>
<dbReference type="FunCoup" id="Q9FHQ3">
    <property type="interactions" value="179"/>
</dbReference>
<dbReference type="IntAct" id="Q9FHQ3">
    <property type="interactions" value="9"/>
</dbReference>
<dbReference type="STRING" id="3702.Q9FHQ3"/>
<dbReference type="PaxDb" id="3702-AT5G37670.1"/>
<dbReference type="ProteomicsDB" id="228749"/>
<dbReference type="EnsemblPlants" id="AT5G37670.1">
    <property type="protein sequence ID" value="AT5G37670.1"/>
    <property type="gene ID" value="AT5G37670"/>
</dbReference>
<dbReference type="GeneID" id="833746"/>
<dbReference type="Gramene" id="AT5G37670.1">
    <property type="protein sequence ID" value="AT5G37670.1"/>
    <property type="gene ID" value="AT5G37670"/>
</dbReference>
<dbReference type="KEGG" id="ath:AT5G37670"/>
<dbReference type="Araport" id="AT5G37670"/>
<dbReference type="TAIR" id="AT5G37670">
    <property type="gene designation" value="HSP15.7"/>
</dbReference>
<dbReference type="eggNOG" id="KOG0710">
    <property type="taxonomic scope" value="Eukaryota"/>
</dbReference>
<dbReference type="HOGENOM" id="CLU_046737_5_2_1"/>
<dbReference type="InParanoid" id="Q9FHQ3"/>
<dbReference type="OMA" id="ENLVWHV"/>
<dbReference type="OrthoDB" id="1431247at2759"/>
<dbReference type="PhylomeDB" id="Q9FHQ3"/>
<dbReference type="PRO" id="PR:Q9FHQ3"/>
<dbReference type="Proteomes" id="UP000006548">
    <property type="component" value="Chromosome 5"/>
</dbReference>
<dbReference type="ExpressionAtlas" id="Q9FHQ3">
    <property type="expression patterns" value="baseline and differential"/>
</dbReference>
<dbReference type="GO" id="GO:0005782">
    <property type="term" value="C:peroxisomal matrix"/>
    <property type="evidence" value="ECO:0000314"/>
    <property type="project" value="UniProtKB"/>
</dbReference>
<dbReference type="GO" id="GO:0071456">
    <property type="term" value="P:cellular response to hypoxia"/>
    <property type="evidence" value="ECO:0007007"/>
    <property type="project" value="TAIR"/>
</dbReference>
<dbReference type="GO" id="GO:0006457">
    <property type="term" value="P:protein folding"/>
    <property type="evidence" value="ECO:0000316"/>
    <property type="project" value="UniProtKB"/>
</dbReference>
<dbReference type="GO" id="GO:0009408">
    <property type="term" value="P:response to heat"/>
    <property type="evidence" value="ECO:0000270"/>
    <property type="project" value="UniProtKB"/>
</dbReference>
<dbReference type="GO" id="GO:0000302">
    <property type="term" value="P:response to reactive oxygen species"/>
    <property type="evidence" value="ECO:0000270"/>
    <property type="project" value="UniProtKB"/>
</dbReference>
<dbReference type="CDD" id="cd06472">
    <property type="entry name" value="ACD_ScHsp26_like"/>
    <property type="match status" value="1"/>
</dbReference>
<dbReference type="FunFam" id="2.60.40.790:FF:000056">
    <property type="entry name" value="15.7 kDa heat shock protein, peroxisomal"/>
    <property type="match status" value="1"/>
</dbReference>
<dbReference type="Gene3D" id="2.60.40.790">
    <property type="match status" value="1"/>
</dbReference>
<dbReference type="InterPro" id="IPR002068">
    <property type="entry name" value="A-crystallin/Hsp20_dom"/>
</dbReference>
<dbReference type="InterPro" id="IPR007052">
    <property type="entry name" value="CS_dom"/>
</dbReference>
<dbReference type="InterPro" id="IPR008978">
    <property type="entry name" value="HSP20-like_chaperone"/>
</dbReference>
<dbReference type="InterPro" id="IPR031107">
    <property type="entry name" value="Small_HSP"/>
</dbReference>
<dbReference type="PANTHER" id="PTHR11527">
    <property type="entry name" value="HEAT-SHOCK PROTEIN 20 FAMILY MEMBER"/>
    <property type="match status" value="1"/>
</dbReference>
<dbReference type="Pfam" id="PF00011">
    <property type="entry name" value="HSP20"/>
    <property type="match status" value="1"/>
</dbReference>
<dbReference type="SUPFAM" id="SSF49764">
    <property type="entry name" value="HSP20-like chaperones"/>
    <property type="match status" value="1"/>
</dbReference>
<dbReference type="PROSITE" id="PS01031">
    <property type="entry name" value="SHSP"/>
    <property type="match status" value="1"/>
</dbReference>
<comment type="function">
    <text evidence="3">Possesses chaperone activity.</text>
</comment>
<comment type="subunit">
    <text>May form oligomeric structures.</text>
</comment>
<comment type="subcellular location">
    <subcellularLocation>
        <location evidence="3">Peroxisome</location>
    </subcellularLocation>
</comment>
<comment type="induction">
    <text evidence="3">By heat shock and methyl viologen (paraquat).</text>
</comment>
<comment type="similarity">
    <text evidence="2">Belongs to the small heat shock protein (HSP20) family.</text>
</comment>
<evidence type="ECO:0000255" key="1"/>
<evidence type="ECO:0000255" key="2">
    <source>
        <dbReference type="PROSITE-ProRule" id="PRU00285"/>
    </source>
</evidence>
<evidence type="ECO:0000269" key="3">
    <source>
    </source>
</evidence>
<reference key="1">
    <citation type="journal article" date="2006" name="Plant Physiol.">
        <title>Identification and characterization of a stress-inducible and a constitutive small heat-shock protein targeted to the matrix of plant peroxisomes.</title>
        <authorList>
            <person name="Ma C."/>
            <person name="Haslbeck M."/>
            <person name="Babujee L."/>
            <person name="Jahn O."/>
            <person name="Reumann S."/>
        </authorList>
    </citation>
    <scope>NUCLEOTIDE SEQUENCE [MRNA]</scope>
    <scope>FUNCTION</scope>
    <scope>SUBCELLULAR LOCATION</scope>
    <scope>INDUCTION</scope>
</reference>
<reference key="2">
    <citation type="journal article" date="1999" name="DNA Res.">
        <title>Structural analysis of Arabidopsis thaliana chromosome 5. IX. Sequence features of the regions of 1,011,550 bp covered by seventeen P1 and TAC clones.</title>
        <authorList>
            <person name="Kaneko T."/>
            <person name="Katoh T."/>
            <person name="Sato S."/>
            <person name="Nakamura Y."/>
            <person name="Asamizu E."/>
            <person name="Kotani H."/>
            <person name="Miyajima N."/>
            <person name="Tabata S."/>
        </authorList>
    </citation>
    <scope>NUCLEOTIDE SEQUENCE [LARGE SCALE GENOMIC DNA]</scope>
    <source>
        <strain>cv. Columbia</strain>
    </source>
</reference>
<reference key="3">
    <citation type="journal article" date="2017" name="Plant J.">
        <title>Araport11: a complete reannotation of the Arabidopsis thaliana reference genome.</title>
        <authorList>
            <person name="Cheng C.Y."/>
            <person name="Krishnakumar V."/>
            <person name="Chan A.P."/>
            <person name="Thibaud-Nissen F."/>
            <person name="Schobel S."/>
            <person name="Town C.D."/>
        </authorList>
    </citation>
    <scope>GENOME REANNOTATION</scope>
    <source>
        <strain>cv. Columbia</strain>
    </source>
</reference>
<reference key="4">
    <citation type="journal article" date="2002" name="Science">
        <title>Functional annotation of a full-length Arabidopsis cDNA collection.</title>
        <authorList>
            <person name="Seki M."/>
            <person name="Narusaka M."/>
            <person name="Kamiya A."/>
            <person name="Ishida J."/>
            <person name="Satou M."/>
            <person name="Sakurai T."/>
            <person name="Nakajima M."/>
            <person name="Enju A."/>
            <person name="Akiyama K."/>
            <person name="Oono Y."/>
            <person name="Muramatsu M."/>
            <person name="Hayashizaki Y."/>
            <person name="Kawai J."/>
            <person name="Carninci P."/>
            <person name="Itoh M."/>
            <person name="Ishii Y."/>
            <person name="Arakawa T."/>
            <person name="Shibata K."/>
            <person name="Shinagawa A."/>
            <person name="Shinozaki K."/>
        </authorList>
    </citation>
    <scope>NUCLEOTIDE SEQUENCE [LARGE SCALE MRNA]</scope>
    <source>
        <strain>cv. Columbia</strain>
    </source>
</reference>
<reference key="5">
    <citation type="journal article" date="2003" name="Science">
        <title>Empirical analysis of transcriptional activity in the Arabidopsis genome.</title>
        <authorList>
            <person name="Yamada K."/>
            <person name="Lim J."/>
            <person name="Dale J.M."/>
            <person name="Chen H."/>
            <person name="Shinn P."/>
            <person name="Palm C.J."/>
            <person name="Southwick A.M."/>
            <person name="Wu H.C."/>
            <person name="Kim C.J."/>
            <person name="Nguyen M."/>
            <person name="Pham P.K."/>
            <person name="Cheuk R.F."/>
            <person name="Karlin-Newmann G."/>
            <person name="Liu S.X."/>
            <person name="Lam B."/>
            <person name="Sakano H."/>
            <person name="Wu T."/>
            <person name="Yu G."/>
            <person name="Miranda M."/>
            <person name="Quach H.L."/>
            <person name="Tripp M."/>
            <person name="Chang C.H."/>
            <person name="Lee J.M."/>
            <person name="Toriumi M.J."/>
            <person name="Chan M.M."/>
            <person name="Tang C.C."/>
            <person name="Onodera C.S."/>
            <person name="Deng J.M."/>
            <person name="Akiyama K."/>
            <person name="Ansari Y."/>
            <person name="Arakawa T."/>
            <person name="Banh J."/>
            <person name="Banno F."/>
            <person name="Bowser L."/>
            <person name="Brooks S.Y."/>
            <person name="Carninci P."/>
            <person name="Chao Q."/>
            <person name="Choy N."/>
            <person name="Enju A."/>
            <person name="Goldsmith A.D."/>
            <person name="Gurjal M."/>
            <person name="Hansen N.F."/>
            <person name="Hayashizaki Y."/>
            <person name="Johnson-Hopson C."/>
            <person name="Hsuan V.W."/>
            <person name="Iida K."/>
            <person name="Karnes M."/>
            <person name="Khan S."/>
            <person name="Koesema E."/>
            <person name="Ishida J."/>
            <person name="Jiang P.X."/>
            <person name="Jones T."/>
            <person name="Kawai J."/>
            <person name="Kamiya A."/>
            <person name="Meyers C."/>
            <person name="Nakajima M."/>
            <person name="Narusaka M."/>
            <person name="Seki M."/>
            <person name="Sakurai T."/>
            <person name="Satou M."/>
            <person name="Tamse R."/>
            <person name="Vaysberg M."/>
            <person name="Wallender E.K."/>
            <person name="Wong C."/>
            <person name="Yamamura Y."/>
            <person name="Yuan S."/>
            <person name="Shinozaki K."/>
            <person name="Davis R.W."/>
            <person name="Theologis A."/>
            <person name="Ecker J.R."/>
        </authorList>
    </citation>
    <scope>NUCLEOTIDE SEQUENCE [LARGE SCALE MRNA]</scope>
    <source>
        <strain>cv. Columbia</strain>
    </source>
</reference>
<protein>
    <recommendedName>
        <fullName>15.7 kDa heat shock protein, peroxisomal</fullName>
        <shortName>AtHsp15.7</shortName>
    </recommendedName>
</protein>
<feature type="chain" id="PRO_0000387492" description="15.7 kDa heat shock protein, peroxisomal">
    <location>
        <begin position="1"/>
        <end position="137"/>
    </location>
</feature>
<feature type="domain" description="sHSP" evidence="2">
    <location>
        <begin position="15"/>
        <end position="134"/>
    </location>
</feature>
<feature type="short sequence motif" description="Microbody targeting signal" evidence="1">
    <location>
        <begin position="135"/>
        <end position="137"/>
    </location>
</feature>